<protein>
    <recommendedName>
        <fullName evidence="1">V-type ATP synthase subunit D</fullName>
    </recommendedName>
    <alternativeName>
        <fullName evidence="1">V-ATPase subunit D</fullName>
    </alternativeName>
</protein>
<comment type="function">
    <text evidence="1">Produces ATP from ADP in the presence of a proton gradient across the membrane.</text>
</comment>
<comment type="similarity">
    <text evidence="1">Belongs to the V-ATPase D subunit family.</text>
</comment>
<evidence type="ECO:0000255" key="1">
    <source>
        <dbReference type="HAMAP-Rule" id="MF_00271"/>
    </source>
</evidence>
<name>VATD_STRP3</name>
<dbReference type="EMBL" id="AE014074">
    <property type="protein sequence ID" value="AAM78729.1"/>
    <property type="molecule type" value="Genomic_DNA"/>
</dbReference>
<dbReference type="RefSeq" id="WP_002993843.1">
    <property type="nucleotide sequence ID" value="NC_004070.1"/>
</dbReference>
<dbReference type="SMR" id="P0DA00"/>
<dbReference type="KEGG" id="spg:SpyM3_0122"/>
<dbReference type="HOGENOM" id="CLU_069688_2_1_9"/>
<dbReference type="Proteomes" id="UP000000564">
    <property type="component" value="Chromosome"/>
</dbReference>
<dbReference type="GO" id="GO:0005524">
    <property type="term" value="F:ATP binding"/>
    <property type="evidence" value="ECO:0007669"/>
    <property type="project" value="UniProtKB-UniRule"/>
</dbReference>
<dbReference type="GO" id="GO:0046933">
    <property type="term" value="F:proton-transporting ATP synthase activity, rotational mechanism"/>
    <property type="evidence" value="ECO:0007669"/>
    <property type="project" value="UniProtKB-UniRule"/>
</dbReference>
<dbReference type="GO" id="GO:0046961">
    <property type="term" value="F:proton-transporting ATPase activity, rotational mechanism"/>
    <property type="evidence" value="ECO:0007669"/>
    <property type="project" value="InterPro"/>
</dbReference>
<dbReference type="GO" id="GO:0042777">
    <property type="term" value="P:proton motive force-driven plasma membrane ATP synthesis"/>
    <property type="evidence" value="ECO:0007669"/>
    <property type="project" value="UniProtKB-UniRule"/>
</dbReference>
<dbReference type="FunFam" id="1.10.287.3240:FF:000007">
    <property type="entry name" value="V-type ATP synthase subunit D"/>
    <property type="match status" value="1"/>
</dbReference>
<dbReference type="Gene3D" id="1.10.287.3240">
    <property type="match status" value="1"/>
</dbReference>
<dbReference type="HAMAP" id="MF_00271">
    <property type="entry name" value="ATP_synth_D_arch"/>
    <property type="match status" value="1"/>
</dbReference>
<dbReference type="InterPro" id="IPR002699">
    <property type="entry name" value="V_ATPase_D"/>
</dbReference>
<dbReference type="NCBIfam" id="NF001546">
    <property type="entry name" value="PRK00373.1-5"/>
    <property type="match status" value="1"/>
</dbReference>
<dbReference type="NCBIfam" id="TIGR00309">
    <property type="entry name" value="V_ATPase_subD"/>
    <property type="match status" value="1"/>
</dbReference>
<dbReference type="PANTHER" id="PTHR11671">
    <property type="entry name" value="V-TYPE ATP SYNTHASE SUBUNIT D"/>
    <property type="match status" value="1"/>
</dbReference>
<dbReference type="Pfam" id="PF01813">
    <property type="entry name" value="ATP-synt_D"/>
    <property type="match status" value="1"/>
</dbReference>
<reference key="1">
    <citation type="journal article" date="2002" name="Proc. Natl. Acad. Sci. U.S.A.">
        <title>Genome sequence of a serotype M3 strain of group A Streptococcus: phage-encoded toxins, the high-virulence phenotype, and clone emergence.</title>
        <authorList>
            <person name="Beres S.B."/>
            <person name="Sylva G.L."/>
            <person name="Barbian K.D."/>
            <person name="Lei B."/>
            <person name="Hoff J.S."/>
            <person name="Mammarella N.D."/>
            <person name="Liu M.-Y."/>
            <person name="Smoot J.C."/>
            <person name="Porcella S.F."/>
            <person name="Parkins L.D."/>
            <person name="Campbell D.S."/>
            <person name="Smith T.M."/>
            <person name="McCormick J.K."/>
            <person name="Leung D.Y.M."/>
            <person name="Schlievert P.M."/>
            <person name="Musser J.M."/>
        </authorList>
    </citation>
    <scope>NUCLEOTIDE SEQUENCE [LARGE SCALE GENOMIC DNA]</scope>
    <source>
        <strain>ATCC BAA-595 / MGAS315</strain>
    </source>
</reference>
<accession>P0DA00</accession>
<accession>Q79YM8</accession>
<accession>Q8K8T0</accession>
<organism>
    <name type="scientific">Streptococcus pyogenes serotype M3 (strain ATCC BAA-595 / MGAS315)</name>
    <dbReference type="NCBI Taxonomy" id="198466"/>
    <lineage>
        <taxon>Bacteria</taxon>
        <taxon>Bacillati</taxon>
        <taxon>Bacillota</taxon>
        <taxon>Bacilli</taxon>
        <taxon>Lactobacillales</taxon>
        <taxon>Streptococcaceae</taxon>
        <taxon>Streptococcus</taxon>
    </lineage>
</organism>
<gene>
    <name evidence="1" type="primary">atpD</name>
    <name type="ordered locus">SpyM3_0122</name>
</gene>
<sequence length="208" mass="24332">MARLNVKPTRMELSNLKNRLKTATRGHKLLKDKRDELMRRFVDLIRENNELRQTIEKELAANMKEFVLAKASENSLMVEELFAVPVHEVTLWIDIENIMSVNVPKFHVQSNTAREQEQGEFAYSYLSSNSEMDNTIQKTKELLEKLLRLAEVEKTCQLMADDIEKTRRRVNGLEYAIIPQLEETIHYIELKLEEAERASLVRIMKITS</sequence>
<keyword id="KW-0066">ATP synthesis</keyword>
<keyword id="KW-0375">Hydrogen ion transport</keyword>
<keyword id="KW-0406">Ion transport</keyword>
<keyword id="KW-0813">Transport</keyword>
<proteinExistence type="inferred from homology"/>
<feature type="chain" id="PRO_0000144269" description="V-type ATP synthase subunit D">
    <location>
        <begin position="1"/>
        <end position="208"/>
    </location>
</feature>